<keyword id="KW-0240">DNA-directed RNA polymerase</keyword>
<keyword id="KW-0548">Nucleotidyltransferase</keyword>
<keyword id="KW-0804">Transcription</keyword>
<keyword id="KW-0808">Transferase</keyword>
<evidence type="ECO:0000255" key="1">
    <source>
        <dbReference type="HAMAP-Rule" id="MF_00059"/>
    </source>
</evidence>
<accession>A5IHP1</accession>
<reference key="1">
    <citation type="submission" date="2006-11" db="EMBL/GenBank/DDBJ databases">
        <title>Identification and characterization of a new conjugation/ type IVA secretion system (trb/tra) of L. pneumophila Corby localized on a mobile genomic island.</title>
        <authorList>
            <person name="Gloeckner G."/>
            <person name="Albert-Weissenberger C."/>
            <person name="Weinmann E."/>
            <person name="Jacobi S."/>
            <person name="Schunder E."/>
            <person name="Steinert M."/>
            <person name="Buchrieser C."/>
            <person name="Hacker J."/>
            <person name="Heuner K."/>
        </authorList>
    </citation>
    <scope>NUCLEOTIDE SEQUENCE [LARGE SCALE GENOMIC DNA]</scope>
    <source>
        <strain>Corby</strain>
    </source>
</reference>
<comment type="function">
    <text evidence="1">DNA-dependent RNA polymerase catalyzes the transcription of DNA into RNA using the four ribonucleoside triphosphates as substrates.</text>
</comment>
<comment type="catalytic activity">
    <reaction evidence="1">
        <text>RNA(n) + a ribonucleoside 5'-triphosphate = RNA(n+1) + diphosphate</text>
        <dbReference type="Rhea" id="RHEA:21248"/>
        <dbReference type="Rhea" id="RHEA-COMP:14527"/>
        <dbReference type="Rhea" id="RHEA-COMP:17342"/>
        <dbReference type="ChEBI" id="CHEBI:33019"/>
        <dbReference type="ChEBI" id="CHEBI:61557"/>
        <dbReference type="ChEBI" id="CHEBI:140395"/>
        <dbReference type="EC" id="2.7.7.6"/>
    </reaction>
</comment>
<comment type="subunit">
    <text evidence="1">Homodimer. The RNAP catalytic core consists of 2 alpha, 1 beta, 1 beta' and 1 omega subunit. When a sigma factor is associated with the core the holoenzyme is formed, which can initiate transcription.</text>
</comment>
<comment type="domain">
    <text evidence="1">The N-terminal domain is essential for RNAP assembly and basal transcription, whereas the C-terminal domain is involved in interaction with transcriptional regulators and with upstream promoter elements.</text>
</comment>
<comment type="similarity">
    <text evidence="1">Belongs to the RNA polymerase alpha chain family.</text>
</comment>
<organism>
    <name type="scientific">Legionella pneumophila (strain Corby)</name>
    <dbReference type="NCBI Taxonomy" id="400673"/>
    <lineage>
        <taxon>Bacteria</taxon>
        <taxon>Pseudomonadati</taxon>
        <taxon>Pseudomonadota</taxon>
        <taxon>Gammaproteobacteria</taxon>
        <taxon>Legionellales</taxon>
        <taxon>Legionellaceae</taxon>
        <taxon>Legionella</taxon>
    </lineage>
</organism>
<name>RPOA_LEGPC</name>
<sequence>MYTEINEMLTPKVLKVQAESPYKARIVLEPLERGFGHTLGNALRRILLSSMPGSAITEASIDGVLHEYSTIEGVQEDVVDLLLNLKSVAIKLTVGNEAQVTLNKEGPCQVTAGDIQLTHGQEIINPELVIANLNEKGKLNMTLKVERGIGFHNTDAFVRYHEDEIEKKTVGKLKIDNSFSPVKKVAYFVDSARVENRTDLDKLTIELETNGTIDAEEAIRISASILQRQLHAFVDMKFEESRADNKERNDFDPVLLRSVDDLELTVRSANCLKAENIHYIGDLVQRTESELLKTPNLGKKSLTEIKDVLASRSLSLGMKLENWPPASLGE</sequence>
<feature type="chain" id="PRO_1000007688" description="DNA-directed RNA polymerase subunit alpha">
    <location>
        <begin position="1"/>
        <end position="330"/>
    </location>
</feature>
<feature type="region of interest" description="Alpha N-terminal domain (alpha-NTD)" evidence="1">
    <location>
        <begin position="1"/>
        <end position="237"/>
    </location>
</feature>
<feature type="region of interest" description="Alpha C-terminal domain (alpha-CTD)" evidence="1">
    <location>
        <begin position="251"/>
        <end position="330"/>
    </location>
</feature>
<gene>
    <name evidence="1" type="primary">rpoA</name>
    <name type="ordered locus">LPC_2990</name>
</gene>
<proteinExistence type="inferred from homology"/>
<dbReference type="EC" id="2.7.7.6" evidence="1"/>
<dbReference type="EMBL" id="CP000675">
    <property type="protein sequence ID" value="ABQ56891.1"/>
    <property type="molecule type" value="Genomic_DNA"/>
</dbReference>
<dbReference type="RefSeq" id="WP_011945553.1">
    <property type="nucleotide sequence ID" value="NZ_JAPMSS010000006.1"/>
</dbReference>
<dbReference type="SMR" id="A5IHP1"/>
<dbReference type="KEGG" id="lpc:LPC_2990"/>
<dbReference type="HOGENOM" id="CLU_053084_0_0_6"/>
<dbReference type="GO" id="GO:0005737">
    <property type="term" value="C:cytoplasm"/>
    <property type="evidence" value="ECO:0007669"/>
    <property type="project" value="UniProtKB-ARBA"/>
</dbReference>
<dbReference type="GO" id="GO:0000428">
    <property type="term" value="C:DNA-directed RNA polymerase complex"/>
    <property type="evidence" value="ECO:0007669"/>
    <property type="project" value="UniProtKB-KW"/>
</dbReference>
<dbReference type="GO" id="GO:0003677">
    <property type="term" value="F:DNA binding"/>
    <property type="evidence" value="ECO:0007669"/>
    <property type="project" value="UniProtKB-UniRule"/>
</dbReference>
<dbReference type="GO" id="GO:0003899">
    <property type="term" value="F:DNA-directed RNA polymerase activity"/>
    <property type="evidence" value="ECO:0007669"/>
    <property type="project" value="UniProtKB-UniRule"/>
</dbReference>
<dbReference type="GO" id="GO:0046983">
    <property type="term" value="F:protein dimerization activity"/>
    <property type="evidence" value="ECO:0007669"/>
    <property type="project" value="InterPro"/>
</dbReference>
<dbReference type="GO" id="GO:0006351">
    <property type="term" value="P:DNA-templated transcription"/>
    <property type="evidence" value="ECO:0007669"/>
    <property type="project" value="UniProtKB-UniRule"/>
</dbReference>
<dbReference type="CDD" id="cd06928">
    <property type="entry name" value="RNAP_alpha_NTD"/>
    <property type="match status" value="1"/>
</dbReference>
<dbReference type="FunFam" id="1.10.150.20:FF:000001">
    <property type="entry name" value="DNA-directed RNA polymerase subunit alpha"/>
    <property type="match status" value="1"/>
</dbReference>
<dbReference type="FunFam" id="2.170.120.12:FF:000001">
    <property type="entry name" value="DNA-directed RNA polymerase subunit alpha"/>
    <property type="match status" value="1"/>
</dbReference>
<dbReference type="Gene3D" id="1.10.150.20">
    <property type="entry name" value="5' to 3' exonuclease, C-terminal subdomain"/>
    <property type="match status" value="1"/>
</dbReference>
<dbReference type="Gene3D" id="2.170.120.12">
    <property type="entry name" value="DNA-directed RNA polymerase, insert domain"/>
    <property type="match status" value="1"/>
</dbReference>
<dbReference type="Gene3D" id="3.30.1360.10">
    <property type="entry name" value="RNA polymerase, RBP11-like subunit"/>
    <property type="match status" value="1"/>
</dbReference>
<dbReference type="HAMAP" id="MF_00059">
    <property type="entry name" value="RNApol_bact_RpoA"/>
    <property type="match status" value="1"/>
</dbReference>
<dbReference type="InterPro" id="IPR011262">
    <property type="entry name" value="DNA-dir_RNA_pol_insert"/>
</dbReference>
<dbReference type="InterPro" id="IPR011263">
    <property type="entry name" value="DNA-dir_RNA_pol_RpoA/D/Rpb3"/>
</dbReference>
<dbReference type="InterPro" id="IPR011773">
    <property type="entry name" value="DNA-dir_RpoA"/>
</dbReference>
<dbReference type="InterPro" id="IPR036603">
    <property type="entry name" value="RBP11-like"/>
</dbReference>
<dbReference type="InterPro" id="IPR011260">
    <property type="entry name" value="RNAP_asu_C"/>
</dbReference>
<dbReference type="InterPro" id="IPR036643">
    <property type="entry name" value="RNApol_insert_sf"/>
</dbReference>
<dbReference type="NCBIfam" id="NF003513">
    <property type="entry name" value="PRK05182.1-2"/>
    <property type="match status" value="1"/>
</dbReference>
<dbReference type="NCBIfam" id="NF003519">
    <property type="entry name" value="PRK05182.2-5"/>
    <property type="match status" value="1"/>
</dbReference>
<dbReference type="NCBIfam" id="TIGR02027">
    <property type="entry name" value="rpoA"/>
    <property type="match status" value="1"/>
</dbReference>
<dbReference type="Pfam" id="PF01000">
    <property type="entry name" value="RNA_pol_A_bac"/>
    <property type="match status" value="1"/>
</dbReference>
<dbReference type="Pfam" id="PF03118">
    <property type="entry name" value="RNA_pol_A_CTD"/>
    <property type="match status" value="1"/>
</dbReference>
<dbReference type="Pfam" id="PF01193">
    <property type="entry name" value="RNA_pol_L"/>
    <property type="match status" value="1"/>
</dbReference>
<dbReference type="SMART" id="SM00662">
    <property type="entry name" value="RPOLD"/>
    <property type="match status" value="1"/>
</dbReference>
<dbReference type="SUPFAM" id="SSF47789">
    <property type="entry name" value="C-terminal domain of RNA polymerase alpha subunit"/>
    <property type="match status" value="1"/>
</dbReference>
<dbReference type="SUPFAM" id="SSF56553">
    <property type="entry name" value="Insert subdomain of RNA polymerase alpha subunit"/>
    <property type="match status" value="1"/>
</dbReference>
<dbReference type="SUPFAM" id="SSF55257">
    <property type="entry name" value="RBP11-like subunits of RNA polymerase"/>
    <property type="match status" value="1"/>
</dbReference>
<protein>
    <recommendedName>
        <fullName evidence="1">DNA-directed RNA polymerase subunit alpha</fullName>
        <shortName evidence="1">RNAP subunit alpha</shortName>
        <ecNumber evidence="1">2.7.7.6</ecNumber>
    </recommendedName>
    <alternativeName>
        <fullName evidence="1">RNA polymerase subunit alpha</fullName>
    </alternativeName>
    <alternativeName>
        <fullName evidence="1">Transcriptase subunit alpha</fullName>
    </alternativeName>
</protein>